<keyword id="KW-0068">Autocatalytic cleavage</keyword>
<keyword id="KW-0963">Cytoplasm</keyword>
<keyword id="KW-0210">Decarboxylase</keyword>
<keyword id="KW-0456">Lyase</keyword>
<keyword id="KW-0566">Pantothenate biosynthesis</keyword>
<keyword id="KW-0670">Pyruvate</keyword>
<keyword id="KW-0704">Schiff base</keyword>
<keyword id="KW-0865">Zymogen</keyword>
<protein>
    <recommendedName>
        <fullName evidence="1">Aspartate 1-decarboxylase</fullName>
        <ecNumber evidence="1">4.1.1.11</ecNumber>
    </recommendedName>
    <alternativeName>
        <fullName evidence="1">Aspartate alpha-decarboxylase</fullName>
    </alternativeName>
    <component>
        <recommendedName>
            <fullName evidence="1">Aspartate 1-decarboxylase beta chain</fullName>
        </recommendedName>
    </component>
    <component>
        <recommendedName>
            <fullName evidence="1">Aspartate 1-decarboxylase alpha chain</fullName>
        </recommendedName>
    </component>
</protein>
<sequence length="114" mass="12774">MLNIYLKSKIHMATVTGKKLFYEGSIEIDEELMERAGISEGEMVLVVNVNNAERFVTYVIKGKRGSREINLNGAAARLAEEGDRVIIMAFTLSETPVKSKTIILNDKNEIVQEK</sequence>
<accession>B1L8P0</accession>
<dbReference type="EC" id="4.1.1.11" evidence="1"/>
<dbReference type="EMBL" id="CP000969">
    <property type="protein sequence ID" value="ACB10169.1"/>
    <property type="molecule type" value="Genomic_DNA"/>
</dbReference>
<dbReference type="RefSeq" id="WP_012311381.1">
    <property type="nucleotide sequence ID" value="NC_010483.1"/>
</dbReference>
<dbReference type="SMR" id="B1L8P0"/>
<dbReference type="KEGG" id="trq:TRQ2_1841"/>
<dbReference type="HOGENOM" id="CLU_115305_2_0_0"/>
<dbReference type="UniPathway" id="UPA00028">
    <property type="reaction ID" value="UER00002"/>
</dbReference>
<dbReference type="Proteomes" id="UP000001687">
    <property type="component" value="Chromosome"/>
</dbReference>
<dbReference type="GO" id="GO:0005829">
    <property type="term" value="C:cytosol"/>
    <property type="evidence" value="ECO:0007669"/>
    <property type="project" value="TreeGrafter"/>
</dbReference>
<dbReference type="GO" id="GO:0004068">
    <property type="term" value="F:aspartate 1-decarboxylase activity"/>
    <property type="evidence" value="ECO:0007669"/>
    <property type="project" value="UniProtKB-UniRule"/>
</dbReference>
<dbReference type="GO" id="GO:0006523">
    <property type="term" value="P:alanine biosynthetic process"/>
    <property type="evidence" value="ECO:0007669"/>
    <property type="project" value="InterPro"/>
</dbReference>
<dbReference type="GO" id="GO:0015940">
    <property type="term" value="P:pantothenate biosynthetic process"/>
    <property type="evidence" value="ECO:0007669"/>
    <property type="project" value="UniProtKB-UniRule"/>
</dbReference>
<dbReference type="CDD" id="cd06919">
    <property type="entry name" value="Asp_decarbox"/>
    <property type="match status" value="1"/>
</dbReference>
<dbReference type="Gene3D" id="2.40.40.20">
    <property type="match status" value="1"/>
</dbReference>
<dbReference type="HAMAP" id="MF_00446">
    <property type="entry name" value="PanD"/>
    <property type="match status" value="1"/>
</dbReference>
<dbReference type="InterPro" id="IPR009010">
    <property type="entry name" value="Asp_de-COase-like_dom_sf"/>
</dbReference>
<dbReference type="InterPro" id="IPR003190">
    <property type="entry name" value="Asp_decarbox"/>
</dbReference>
<dbReference type="NCBIfam" id="TIGR00223">
    <property type="entry name" value="panD"/>
    <property type="match status" value="1"/>
</dbReference>
<dbReference type="PANTHER" id="PTHR21012">
    <property type="entry name" value="ASPARTATE 1-DECARBOXYLASE"/>
    <property type="match status" value="1"/>
</dbReference>
<dbReference type="PANTHER" id="PTHR21012:SF0">
    <property type="entry name" value="ASPARTATE 1-DECARBOXYLASE"/>
    <property type="match status" value="1"/>
</dbReference>
<dbReference type="Pfam" id="PF02261">
    <property type="entry name" value="Asp_decarbox"/>
    <property type="match status" value="1"/>
</dbReference>
<dbReference type="PIRSF" id="PIRSF006246">
    <property type="entry name" value="Asp_decarbox"/>
    <property type="match status" value="1"/>
</dbReference>
<dbReference type="SUPFAM" id="SSF50692">
    <property type="entry name" value="ADC-like"/>
    <property type="match status" value="1"/>
</dbReference>
<evidence type="ECO:0000255" key="1">
    <source>
        <dbReference type="HAMAP-Rule" id="MF_00446"/>
    </source>
</evidence>
<gene>
    <name evidence="1" type="primary">panD</name>
    <name type="ordered locus">TRQ2_1841</name>
</gene>
<organism>
    <name type="scientific">Thermotoga sp. (strain RQ2)</name>
    <dbReference type="NCBI Taxonomy" id="126740"/>
    <lineage>
        <taxon>Bacteria</taxon>
        <taxon>Thermotogati</taxon>
        <taxon>Thermotogota</taxon>
        <taxon>Thermotogae</taxon>
        <taxon>Thermotogales</taxon>
        <taxon>Thermotogaceae</taxon>
        <taxon>Thermotoga</taxon>
    </lineage>
</organism>
<feature type="chain" id="PRO_1000192057" description="Aspartate 1-decarboxylase beta chain" evidence="1">
    <location>
        <begin position="1"/>
        <end position="24"/>
    </location>
</feature>
<feature type="chain" id="PRO_1000192058" description="Aspartate 1-decarboxylase alpha chain" evidence="1">
    <location>
        <begin position="25"/>
        <end position="114"/>
    </location>
</feature>
<feature type="active site" description="Schiff-base intermediate with substrate; via pyruvic acid" evidence="1">
    <location>
        <position position="25"/>
    </location>
</feature>
<feature type="active site" description="Proton donor" evidence="1">
    <location>
        <position position="58"/>
    </location>
</feature>
<feature type="binding site" evidence="1">
    <location>
        <position position="57"/>
    </location>
    <ligand>
        <name>substrate</name>
    </ligand>
</feature>
<feature type="binding site" evidence="1">
    <location>
        <begin position="73"/>
        <end position="75"/>
    </location>
    <ligand>
        <name>substrate</name>
    </ligand>
</feature>
<feature type="modified residue" description="Pyruvic acid (Ser)" evidence="1">
    <location>
        <position position="25"/>
    </location>
</feature>
<reference key="1">
    <citation type="journal article" date="2011" name="J. Bacteriol.">
        <title>Genome sequence of Thermotoga sp. strain RQ2, a hyperthermophilic bacterium isolated from a geothermally heated region of the seafloor near Ribeira Quente, the Azores.</title>
        <authorList>
            <person name="Swithers K.S."/>
            <person name="DiPippo J.L."/>
            <person name="Bruce D.C."/>
            <person name="Detter C."/>
            <person name="Tapia R."/>
            <person name="Han S."/>
            <person name="Saunders E."/>
            <person name="Goodwin L.A."/>
            <person name="Han J."/>
            <person name="Woyke T."/>
            <person name="Pitluck S."/>
            <person name="Pennacchio L."/>
            <person name="Nolan M."/>
            <person name="Mikhailova N."/>
            <person name="Lykidis A."/>
            <person name="Land M.L."/>
            <person name="Brettin T."/>
            <person name="Stetter K.O."/>
            <person name="Nelson K.E."/>
            <person name="Gogarten J.P."/>
            <person name="Noll K.M."/>
        </authorList>
    </citation>
    <scope>NUCLEOTIDE SEQUENCE [LARGE SCALE GENOMIC DNA]</scope>
    <source>
        <strain>RQ2</strain>
    </source>
</reference>
<proteinExistence type="inferred from homology"/>
<name>PAND_THESQ</name>
<comment type="function">
    <text evidence="1">Catalyzes the pyruvoyl-dependent decarboxylation of aspartate to produce beta-alanine.</text>
</comment>
<comment type="catalytic activity">
    <reaction evidence="1">
        <text>L-aspartate + H(+) = beta-alanine + CO2</text>
        <dbReference type="Rhea" id="RHEA:19497"/>
        <dbReference type="ChEBI" id="CHEBI:15378"/>
        <dbReference type="ChEBI" id="CHEBI:16526"/>
        <dbReference type="ChEBI" id="CHEBI:29991"/>
        <dbReference type="ChEBI" id="CHEBI:57966"/>
        <dbReference type="EC" id="4.1.1.11"/>
    </reaction>
</comment>
<comment type="cofactor">
    <cofactor evidence="1">
        <name>pyruvate</name>
        <dbReference type="ChEBI" id="CHEBI:15361"/>
    </cofactor>
    <text evidence="1">Binds 1 pyruvoyl group covalently per subunit.</text>
</comment>
<comment type="pathway">
    <text evidence="1">Cofactor biosynthesis; (R)-pantothenate biosynthesis; beta-alanine from L-aspartate: step 1/1.</text>
</comment>
<comment type="subunit">
    <text evidence="1">Heterooctamer of four alpha and four beta subunits.</text>
</comment>
<comment type="subcellular location">
    <subcellularLocation>
        <location evidence="1">Cytoplasm</location>
    </subcellularLocation>
</comment>
<comment type="PTM">
    <text evidence="1">Is synthesized initially as an inactive proenzyme, which is activated by self-cleavage at a specific serine bond to produce a beta-subunit with a hydroxyl group at its C-terminus and an alpha-subunit with a pyruvoyl group at its N-terminus.</text>
</comment>
<comment type="similarity">
    <text evidence="1">Belongs to the PanD family.</text>
</comment>